<proteinExistence type="inferred from homology"/>
<name>MURE_ECO57</name>
<organism>
    <name type="scientific">Escherichia coli O157:H7</name>
    <dbReference type="NCBI Taxonomy" id="83334"/>
    <lineage>
        <taxon>Bacteria</taxon>
        <taxon>Pseudomonadati</taxon>
        <taxon>Pseudomonadota</taxon>
        <taxon>Gammaproteobacteria</taxon>
        <taxon>Enterobacterales</taxon>
        <taxon>Enterobacteriaceae</taxon>
        <taxon>Escherichia</taxon>
    </lineage>
</organism>
<feature type="initiator methionine" description="Removed" evidence="1">
    <location>
        <position position="1"/>
    </location>
</feature>
<feature type="chain" id="PRO_0000101895" description="UDP-N-acetylmuramoyl-L-alanyl-D-glutamate--2,6-diaminopimelate ligase">
    <location>
        <begin position="2"/>
        <end position="495"/>
    </location>
</feature>
<feature type="short sequence motif" description="Meso-diaminopimelate recognition motif">
    <location>
        <begin position="414"/>
        <end position="417"/>
    </location>
</feature>
<feature type="binding site" evidence="2">
    <location>
        <position position="27"/>
    </location>
    <ligand>
        <name>UDP-N-acetyl-alpha-D-muramoyl-L-alanyl-D-glutamate</name>
        <dbReference type="ChEBI" id="CHEBI:83900"/>
    </ligand>
</feature>
<feature type="binding site" evidence="2">
    <location>
        <position position="29"/>
    </location>
    <ligand>
        <name>UDP-N-acetyl-alpha-D-muramoyl-L-alanyl-D-glutamate</name>
        <dbReference type="ChEBI" id="CHEBI:83900"/>
    </ligand>
</feature>
<feature type="binding site" evidence="2">
    <location>
        <begin position="44"/>
        <end position="46"/>
    </location>
    <ligand>
        <name>UDP-N-acetyl-alpha-D-muramoyl-L-alanyl-D-glutamate</name>
        <dbReference type="ChEBI" id="CHEBI:83900"/>
    </ligand>
</feature>
<feature type="binding site" evidence="2">
    <location>
        <begin position="116"/>
        <end position="122"/>
    </location>
    <ligand>
        <name>ATP</name>
        <dbReference type="ChEBI" id="CHEBI:30616"/>
    </ligand>
</feature>
<feature type="binding site" evidence="2">
    <location>
        <position position="157"/>
    </location>
    <ligand>
        <name>UDP-N-acetyl-alpha-D-muramoyl-L-alanyl-D-glutamate</name>
        <dbReference type="ChEBI" id="CHEBI:83900"/>
    </ligand>
</feature>
<feature type="binding site" evidence="2">
    <location>
        <begin position="158"/>
        <end position="159"/>
    </location>
    <ligand>
        <name>UDP-N-acetyl-alpha-D-muramoyl-L-alanyl-D-glutamate</name>
        <dbReference type="ChEBI" id="CHEBI:83900"/>
    </ligand>
</feature>
<feature type="binding site" evidence="2">
    <location>
        <position position="185"/>
    </location>
    <ligand>
        <name>UDP-N-acetyl-alpha-D-muramoyl-L-alanyl-D-glutamate</name>
        <dbReference type="ChEBI" id="CHEBI:83900"/>
    </ligand>
</feature>
<feature type="binding site" evidence="2">
    <location>
        <position position="191"/>
    </location>
    <ligand>
        <name>UDP-N-acetyl-alpha-D-muramoyl-L-alanyl-D-glutamate</name>
        <dbReference type="ChEBI" id="CHEBI:83900"/>
    </ligand>
</feature>
<feature type="binding site" evidence="2">
    <location>
        <position position="193"/>
    </location>
    <ligand>
        <name>UDP-N-acetyl-alpha-D-muramoyl-L-alanyl-D-glutamate</name>
        <dbReference type="ChEBI" id="CHEBI:83900"/>
    </ligand>
</feature>
<feature type="binding site" evidence="2">
    <location>
        <position position="390"/>
    </location>
    <ligand>
        <name>meso-2,6-diaminopimelate</name>
        <dbReference type="ChEBI" id="CHEBI:57791"/>
    </ligand>
</feature>
<feature type="binding site" evidence="2">
    <location>
        <begin position="414"/>
        <end position="417"/>
    </location>
    <ligand>
        <name>meso-2,6-diaminopimelate</name>
        <dbReference type="ChEBI" id="CHEBI:57791"/>
    </ligand>
</feature>
<feature type="binding site" evidence="2">
    <location>
        <position position="465"/>
    </location>
    <ligand>
        <name>meso-2,6-diaminopimelate</name>
        <dbReference type="ChEBI" id="CHEBI:57791"/>
    </ligand>
</feature>
<feature type="binding site" evidence="2">
    <location>
        <position position="469"/>
    </location>
    <ligand>
        <name>meso-2,6-diaminopimelate</name>
        <dbReference type="ChEBI" id="CHEBI:57791"/>
    </ligand>
</feature>
<feature type="modified residue" description="N6-carboxylysine" evidence="2">
    <location>
        <position position="225"/>
    </location>
</feature>
<comment type="function">
    <text evidence="2">Catalyzes the addition of meso-diaminopimelic acid to the nucleotide precursor UDP-N-acetylmuramoyl-L-alanyl-D-glutamate (UMAG) in the biosynthesis of bacterial cell-wall peptidoglycan.</text>
</comment>
<comment type="catalytic activity">
    <reaction evidence="2">
        <text>UDP-N-acetyl-alpha-D-muramoyl-L-alanyl-D-glutamate + meso-2,6-diaminopimelate + ATP = UDP-N-acetyl-alpha-D-muramoyl-L-alanyl-gamma-D-glutamyl-meso-2,6-diaminopimelate + ADP + phosphate + H(+)</text>
        <dbReference type="Rhea" id="RHEA:23676"/>
        <dbReference type="ChEBI" id="CHEBI:15378"/>
        <dbReference type="ChEBI" id="CHEBI:30616"/>
        <dbReference type="ChEBI" id="CHEBI:43474"/>
        <dbReference type="ChEBI" id="CHEBI:57791"/>
        <dbReference type="ChEBI" id="CHEBI:83900"/>
        <dbReference type="ChEBI" id="CHEBI:83905"/>
        <dbReference type="ChEBI" id="CHEBI:456216"/>
        <dbReference type="EC" id="6.3.2.13"/>
    </reaction>
</comment>
<comment type="cofactor">
    <cofactor evidence="2">
        <name>Mg(2+)</name>
        <dbReference type="ChEBI" id="CHEBI:18420"/>
    </cofactor>
</comment>
<comment type="pathway">
    <text evidence="2">Cell wall biogenesis; peptidoglycan biosynthesis.</text>
</comment>
<comment type="subcellular location">
    <subcellularLocation>
        <location evidence="2">Cytoplasm</location>
    </subcellularLocation>
</comment>
<comment type="PTM">
    <text evidence="2">Carboxylation is probably crucial for Mg(2+) binding and, consequently, for the gamma-phosphate positioning of ATP.</text>
</comment>
<comment type="similarity">
    <text evidence="2">Belongs to the MurCDEF family. MurE subfamily.</text>
</comment>
<gene>
    <name evidence="2" type="primary">murE</name>
    <name type="ordered locus">Z0095</name>
    <name type="ordered locus">ECs0089</name>
</gene>
<reference key="1">
    <citation type="journal article" date="2001" name="Nature">
        <title>Genome sequence of enterohaemorrhagic Escherichia coli O157:H7.</title>
        <authorList>
            <person name="Perna N.T."/>
            <person name="Plunkett G. III"/>
            <person name="Burland V."/>
            <person name="Mau B."/>
            <person name="Glasner J.D."/>
            <person name="Rose D.J."/>
            <person name="Mayhew G.F."/>
            <person name="Evans P.S."/>
            <person name="Gregor J."/>
            <person name="Kirkpatrick H.A."/>
            <person name="Posfai G."/>
            <person name="Hackett J."/>
            <person name="Klink S."/>
            <person name="Boutin A."/>
            <person name="Shao Y."/>
            <person name="Miller L."/>
            <person name="Grotbeck E.J."/>
            <person name="Davis N.W."/>
            <person name="Lim A."/>
            <person name="Dimalanta E.T."/>
            <person name="Potamousis K."/>
            <person name="Apodaca J."/>
            <person name="Anantharaman T.S."/>
            <person name="Lin J."/>
            <person name="Yen G."/>
            <person name="Schwartz D.C."/>
            <person name="Welch R.A."/>
            <person name="Blattner F.R."/>
        </authorList>
    </citation>
    <scope>NUCLEOTIDE SEQUENCE [LARGE SCALE GENOMIC DNA]</scope>
    <source>
        <strain>O157:H7 / EDL933 / ATCC 700927 / EHEC</strain>
    </source>
</reference>
<reference key="2">
    <citation type="journal article" date="2001" name="DNA Res.">
        <title>Complete genome sequence of enterohemorrhagic Escherichia coli O157:H7 and genomic comparison with a laboratory strain K-12.</title>
        <authorList>
            <person name="Hayashi T."/>
            <person name="Makino K."/>
            <person name="Ohnishi M."/>
            <person name="Kurokawa K."/>
            <person name="Ishii K."/>
            <person name="Yokoyama K."/>
            <person name="Han C.-G."/>
            <person name="Ohtsubo E."/>
            <person name="Nakayama K."/>
            <person name="Murata T."/>
            <person name="Tanaka M."/>
            <person name="Tobe T."/>
            <person name="Iida T."/>
            <person name="Takami H."/>
            <person name="Honda T."/>
            <person name="Sasakawa C."/>
            <person name="Ogasawara N."/>
            <person name="Yasunaga T."/>
            <person name="Kuhara S."/>
            <person name="Shiba T."/>
            <person name="Hattori M."/>
            <person name="Shinagawa H."/>
        </authorList>
    </citation>
    <scope>NUCLEOTIDE SEQUENCE [LARGE SCALE GENOMIC DNA]</scope>
    <source>
        <strain>O157:H7 / Sakai / RIMD 0509952 / EHEC</strain>
    </source>
</reference>
<dbReference type="EC" id="6.3.2.13" evidence="2"/>
<dbReference type="EMBL" id="AE005174">
    <property type="protein sequence ID" value="AAG54389.1"/>
    <property type="molecule type" value="Genomic_DNA"/>
</dbReference>
<dbReference type="EMBL" id="BA000007">
    <property type="protein sequence ID" value="BAB33512.1"/>
    <property type="molecule type" value="Genomic_DNA"/>
</dbReference>
<dbReference type="PIR" id="A85491">
    <property type="entry name" value="A85491"/>
</dbReference>
<dbReference type="PIR" id="A90640">
    <property type="entry name" value="A90640"/>
</dbReference>
<dbReference type="RefSeq" id="NP_308116.1">
    <property type="nucleotide sequence ID" value="NC_002695.1"/>
</dbReference>
<dbReference type="RefSeq" id="WP_000785149.1">
    <property type="nucleotide sequence ID" value="NZ_VOAI01000002.1"/>
</dbReference>
<dbReference type="SMR" id="Q8X9Z2"/>
<dbReference type="STRING" id="155864.Z0095"/>
<dbReference type="GeneID" id="913536"/>
<dbReference type="KEGG" id="ece:Z0095"/>
<dbReference type="KEGG" id="ecs:ECs_0089"/>
<dbReference type="PATRIC" id="fig|386585.9.peg.189"/>
<dbReference type="eggNOG" id="COG0769">
    <property type="taxonomic scope" value="Bacteria"/>
</dbReference>
<dbReference type="HOGENOM" id="CLU_022291_3_2_6"/>
<dbReference type="OMA" id="EYFIMEV"/>
<dbReference type="UniPathway" id="UPA00219"/>
<dbReference type="Proteomes" id="UP000000558">
    <property type="component" value="Chromosome"/>
</dbReference>
<dbReference type="Proteomes" id="UP000002519">
    <property type="component" value="Chromosome"/>
</dbReference>
<dbReference type="GO" id="GO:0005737">
    <property type="term" value="C:cytoplasm"/>
    <property type="evidence" value="ECO:0007669"/>
    <property type="project" value="UniProtKB-SubCell"/>
</dbReference>
<dbReference type="GO" id="GO:0005524">
    <property type="term" value="F:ATP binding"/>
    <property type="evidence" value="ECO:0007669"/>
    <property type="project" value="UniProtKB-UniRule"/>
</dbReference>
<dbReference type="GO" id="GO:0000287">
    <property type="term" value="F:magnesium ion binding"/>
    <property type="evidence" value="ECO:0007669"/>
    <property type="project" value="UniProtKB-UniRule"/>
</dbReference>
<dbReference type="GO" id="GO:0008765">
    <property type="term" value="F:UDP-N-acetylmuramoylalanyl-D-glutamate-2,6-diaminopimelate ligase activity"/>
    <property type="evidence" value="ECO:0007669"/>
    <property type="project" value="UniProtKB-UniRule"/>
</dbReference>
<dbReference type="GO" id="GO:0051301">
    <property type="term" value="P:cell division"/>
    <property type="evidence" value="ECO:0007669"/>
    <property type="project" value="UniProtKB-KW"/>
</dbReference>
<dbReference type="GO" id="GO:0071555">
    <property type="term" value="P:cell wall organization"/>
    <property type="evidence" value="ECO:0007669"/>
    <property type="project" value="UniProtKB-KW"/>
</dbReference>
<dbReference type="GO" id="GO:0009252">
    <property type="term" value="P:peptidoglycan biosynthetic process"/>
    <property type="evidence" value="ECO:0007669"/>
    <property type="project" value="UniProtKB-UniRule"/>
</dbReference>
<dbReference type="GO" id="GO:0008360">
    <property type="term" value="P:regulation of cell shape"/>
    <property type="evidence" value="ECO:0007669"/>
    <property type="project" value="UniProtKB-KW"/>
</dbReference>
<dbReference type="FunFam" id="3.40.1190.10:FF:000006">
    <property type="entry name" value="UDP-N-acetylmuramoyl-L-alanyl-D-glutamate--2,6-diaminopimelate ligase"/>
    <property type="match status" value="1"/>
</dbReference>
<dbReference type="FunFam" id="3.40.1390.10:FF:000002">
    <property type="entry name" value="UDP-N-acetylmuramoyl-L-alanyl-D-glutamate--2,6-diaminopimelate ligase"/>
    <property type="match status" value="1"/>
</dbReference>
<dbReference type="FunFam" id="3.90.190.20:FF:000006">
    <property type="entry name" value="UDP-N-acetylmuramoyl-L-alanyl-D-glutamate--2,6-diaminopimelate ligase"/>
    <property type="match status" value="1"/>
</dbReference>
<dbReference type="Gene3D" id="3.90.190.20">
    <property type="entry name" value="Mur ligase, C-terminal domain"/>
    <property type="match status" value="1"/>
</dbReference>
<dbReference type="Gene3D" id="3.40.1190.10">
    <property type="entry name" value="Mur-like, catalytic domain"/>
    <property type="match status" value="1"/>
</dbReference>
<dbReference type="Gene3D" id="3.40.1390.10">
    <property type="entry name" value="MurE/MurF, N-terminal domain"/>
    <property type="match status" value="1"/>
</dbReference>
<dbReference type="HAMAP" id="MF_00208">
    <property type="entry name" value="MurE"/>
    <property type="match status" value="1"/>
</dbReference>
<dbReference type="InterPro" id="IPR036565">
    <property type="entry name" value="Mur-like_cat_sf"/>
</dbReference>
<dbReference type="InterPro" id="IPR004101">
    <property type="entry name" value="Mur_ligase_C"/>
</dbReference>
<dbReference type="InterPro" id="IPR036615">
    <property type="entry name" value="Mur_ligase_C_dom_sf"/>
</dbReference>
<dbReference type="InterPro" id="IPR013221">
    <property type="entry name" value="Mur_ligase_cen"/>
</dbReference>
<dbReference type="InterPro" id="IPR000713">
    <property type="entry name" value="Mur_ligase_N"/>
</dbReference>
<dbReference type="InterPro" id="IPR035911">
    <property type="entry name" value="MurE/MurF_N"/>
</dbReference>
<dbReference type="InterPro" id="IPR005761">
    <property type="entry name" value="UDP-N-AcMur-Glu-dNH2Pim_ligase"/>
</dbReference>
<dbReference type="NCBIfam" id="TIGR01085">
    <property type="entry name" value="murE"/>
    <property type="match status" value="1"/>
</dbReference>
<dbReference type="NCBIfam" id="NF001123">
    <property type="entry name" value="PRK00139.1-1"/>
    <property type="match status" value="1"/>
</dbReference>
<dbReference type="NCBIfam" id="NF001124">
    <property type="entry name" value="PRK00139.1-2"/>
    <property type="match status" value="1"/>
</dbReference>
<dbReference type="NCBIfam" id="NF001126">
    <property type="entry name" value="PRK00139.1-4"/>
    <property type="match status" value="1"/>
</dbReference>
<dbReference type="PANTHER" id="PTHR23135">
    <property type="entry name" value="MUR LIGASE FAMILY MEMBER"/>
    <property type="match status" value="1"/>
</dbReference>
<dbReference type="PANTHER" id="PTHR23135:SF4">
    <property type="entry name" value="UDP-N-ACETYLMURAMOYL-L-ALANYL-D-GLUTAMATE--2,6-DIAMINOPIMELATE LIGASE MURE HOMOLOG, CHLOROPLASTIC"/>
    <property type="match status" value="1"/>
</dbReference>
<dbReference type="Pfam" id="PF01225">
    <property type="entry name" value="Mur_ligase"/>
    <property type="match status" value="1"/>
</dbReference>
<dbReference type="Pfam" id="PF02875">
    <property type="entry name" value="Mur_ligase_C"/>
    <property type="match status" value="1"/>
</dbReference>
<dbReference type="Pfam" id="PF08245">
    <property type="entry name" value="Mur_ligase_M"/>
    <property type="match status" value="1"/>
</dbReference>
<dbReference type="SUPFAM" id="SSF53623">
    <property type="entry name" value="MurD-like peptide ligases, catalytic domain"/>
    <property type="match status" value="1"/>
</dbReference>
<dbReference type="SUPFAM" id="SSF53244">
    <property type="entry name" value="MurD-like peptide ligases, peptide-binding domain"/>
    <property type="match status" value="1"/>
</dbReference>
<dbReference type="SUPFAM" id="SSF63418">
    <property type="entry name" value="MurE/MurF N-terminal domain"/>
    <property type="match status" value="1"/>
</dbReference>
<protein>
    <recommendedName>
        <fullName evidence="2">UDP-N-acetylmuramoyl-L-alanyl-D-glutamate--2,6-diaminopimelate ligase</fullName>
        <ecNumber evidence="2">6.3.2.13</ecNumber>
    </recommendedName>
    <alternativeName>
        <fullName evidence="2">Meso-A2pm-adding enzyme</fullName>
    </alternativeName>
    <alternativeName>
        <fullName evidence="2">Meso-diaminopimelate-adding enzyme</fullName>
    </alternativeName>
    <alternativeName>
        <fullName evidence="2">UDP-MurNAc-L-Ala-D-Glu:meso-diaminopimelate ligase</fullName>
    </alternativeName>
    <alternativeName>
        <fullName evidence="2">UDP-MurNAc-tripeptide synthetase</fullName>
    </alternativeName>
    <alternativeName>
        <fullName evidence="2">UDP-N-acetylmuramyl-tripeptide synthetase</fullName>
    </alternativeName>
</protein>
<keyword id="KW-0067">ATP-binding</keyword>
<keyword id="KW-0131">Cell cycle</keyword>
<keyword id="KW-0132">Cell division</keyword>
<keyword id="KW-0133">Cell shape</keyword>
<keyword id="KW-0961">Cell wall biogenesis/degradation</keyword>
<keyword id="KW-0963">Cytoplasm</keyword>
<keyword id="KW-0436">Ligase</keyword>
<keyword id="KW-0460">Magnesium</keyword>
<keyword id="KW-0547">Nucleotide-binding</keyword>
<keyword id="KW-0573">Peptidoglycan synthesis</keyword>
<keyword id="KW-1185">Reference proteome</keyword>
<accession>Q8X9Z2</accession>
<sequence>MADRNLRDLLAPWVPDAPSRALREMTLDSRVAAAGDLFVAVVGHQADGRRYIPQAIAQGVAAIIAEAKGEATDGEIREMHGVPVIYLSQLNERLSALAGRFYHEPSDNLRLVGVTGTNGKTTTTQLLAQWSQLLGETSAVMGTVGNGLLGKVIPTENTTGSAVDVQHELAGLVDQDATFCAMEVSSHGLVQHRVAALKFAASVFTNLSRDHLDYHGDMEHYEAAKWLLYSEHHCGQAIINADDEVGRRWLAKLPDAVAVSMEDHINPNCHGRWLKATEVNYHDSGATIRFSSSWGDGEIESHLMGAFNVSNLLLALATLLALGYPLADLLKTAARLQPVCGRMEVFTAPGKPTVVVDYAHTPDALEKALQAARLHCAGKLWCVFGCGGDRDKGKRPLMGAIAEEFADVAVVTDDNPRTEEPRAIINDILAGMLDAGHAKVMEDRAEAVTCAVMQAKENDVVLVAGKGHEDYQIVGNQRLDYSDRVTVARLLGVIA</sequence>
<evidence type="ECO:0000250" key="1"/>
<evidence type="ECO:0000255" key="2">
    <source>
        <dbReference type="HAMAP-Rule" id="MF_00208"/>
    </source>
</evidence>